<name>DHN1_PEA</name>
<gene>
    <name type="primary">DHN1</name>
</gene>
<dbReference type="EMBL" id="X63061">
    <property type="protein sequence ID" value="CAA44787.1"/>
    <property type="molecule type" value="mRNA"/>
</dbReference>
<dbReference type="PIR" id="S25088">
    <property type="entry name" value="S25088"/>
</dbReference>
<dbReference type="EnsemblPlants" id="Psat1g038720.1">
    <property type="protein sequence ID" value="Psat1g038720.1.cds1"/>
    <property type="gene ID" value="Psat1g038720"/>
</dbReference>
<dbReference type="Gramene" id="Psat1g038720.1">
    <property type="protein sequence ID" value="Psat1g038720.1.cds1"/>
    <property type="gene ID" value="Psat1g038720"/>
</dbReference>
<dbReference type="GO" id="GO:0005829">
    <property type="term" value="C:cytosol"/>
    <property type="evidence" value="ECO:0007669"/>
    <property type="project" value="TreeGrafter"/>
</dbReference>
<dbReference type="GO" id="GO:0009631">
    <property type="term" value="P:cold acclimation"/>
    <property type="evidence" value="ECO:0007669"/>
    <property type="project" value="TreeGrafter"/>
</dbReference>
<dbReference type="GO" id="GO:0009737">
    <property type="term" value="P:response to abscisic acid"/>
    <property type="evidence" value="ECO:0007669"/>
    <property type="project" value="TreeGrafter"/>
</dbReference>
<dbReference type="GO" id="GO:0009414">
    <property type="term" value="P:response to water deprivation"/>
    <property type="evidence" value="ECO:0007669"/>
    <property type="project" value="UniProtKB-ARBA"/>
</dbReference>
<dbReference type="InterPro" id="IPR000167">
    <property type="entry name" value="Dehydrin"/>
</dbReference>
<dbReference type="InterPro" id="IPR030513">
    <property type="entry name" value="Dehydrin_CS"/>
</dbReference>
<dbReference type="PANTHER" id="PTHR33346:SF42">
    <property type="entry name" value="DEHYDRIN XERO 1"/>
    <property type="match status" value="1"/>
</dbReference>
<dbReference type="PANTHER" id="PTHR33346">
    <property type="entry name" value="DEHYDRIN XERO 2-RELATED"/>
    <property type="match status" value="1"/>
</dbReference>
<dbReference type="Pfam" id="PF00257">
    <property type="entry name" value="Dehydrin"/>
    <property type="match status" value="1"/>
</dbReference>
<dbReference type="PROSITE" id="PS00823">
    <property type="entry name" value="DEHYDRIN_2"/>
    <property type="match status" value="2"/>
</dbReference>
<organism>
    <name type="scientific">Pisum sativum</name>
    <name type="common">Garden pea</name>
    <name type="synonym">Lathyrus oleraceus</name>
    <dbReference type="NCBI Taxonomy" id="3888"/>
    <lineage>
        <taxon>Eukaryota</taxon>
        <taxon>Viridiplantae</taxon>
        <taxon>Streptophyta</taxon>
        <taxon>Embryophyta</taxon>
        <taxon>Tracheophyta</taxon>
        <taxon>Spermatophyta</taxon>
        <taxon>Magnoliopsida</taxon>
        <taxon>eudicotyledons</taxon>
        <taxon>Gunneridae</taxon>
        <taxon>Pentapetalae</taxon>
        <taxon>rosids</taxon>
        <taxon>fabids</taxon>
        <taxon>Fabales</taxon>
        <taxon>Fabaceae</taxon>
        <taxon>Papilionoideae</taxon>
        <taxon>50 kb inversion clade</taxon>
        <taxon>NPAAA clade</taxon>
        <taxon>Hologalegina</taxon>
        <taxon>IRL clade</taxon>
        <taxon>Fabeae</taxon>
        <taxon>Pisum</taxon>
    </lineage>
</organism>
<reference key="1">
    <citation type="journal article" date="1992" name="Plant Mol. Biol.">
        <title>Pea dehydrins: identification, characterisation and expression.</title>
        <authorList>
            <person name="Robertson M."/>
            <person name="Chandler P.M."/>
        </authorList>
    </citation>
    <scope>NUCLEOTIDE SEQUENCE [MRNA]</scope>
    <source>
        <strain>cv. Greenfeast</strain>
        <tissue>Cotyledon</tissue>
    </source>
</reference>
<protein>
    <recommendedName>
        <fullName>Dehydrin DHN1</fullName>
    </recommendedName>
</protein>
<keyword id="KW-0677">Repeat</keyword>
<keyword id="KW-0346">Stress response</keyword>
<feature type="chain" id="PRO_0000100058" description="Dehydrin DHN1">
    <location>
        <begin position="1"/>
        <end position="197"/>
    </location>
</feature>
<feature type="repeat" description="1-1">
    <location>
        <begin position="16"/>
        <end position="21"/>
    </location>
</feature>
<feature type="repeat" description="1-2">
    <location>
        <begin position="26"/>
        <end position="31"/>
    </location>
</feature>
<feature type="repeat" description="2-1">
    <location>
        <begin position="126"/>
        <end position="133"/>
    </location>
</feature>
<feature type="repeat" description="2-2">
    <location>
        <begin position="183"/>
        <end position="190"/>
    </location>
</feature>
<feature type="region of interest" description="Disordered" evidence="1">
    <location>
        <begin position="1"/>
        <end position="86"/>
    </location>
</feature>
<feature type="region of interest" description="2 X approximate repeats">
    <location>
        <begin position="16"/>
        <end position="31"/>
    </location>
</feature>
<feature type="region of interest" description="2 X approximate repeats">
    <location>
        <begin position="126"/>
        <end position="190"/>
    </location>
</feature>
<feature type="region of interest" description="Disordered" evidence="1">
    <location>
        <begin position="133"/>
        <end position="197"/>
    </location>
</feature>
<feature type="compositionally biased region" description="Polar residues" evidence="1">
    <location>
        <begin position="1"/>
        <end position="14"/>
    </location>
</feature>
<feature type="compositionally biased region" description="Gly residues" evidence="1">
    <location>
        <begin position="74"/>
        <end position="83"/>
    </location>
</feature>
<feature type="compositionally biased region" description="Gly residues" evidence="1">
    <location>
        <begin position="144"/>
        <end position="160"/>
    </location>
</feature>
<feature type="compositionally biased region" description="Basic and acidic residues" evidence="1">
    <location>
        <begin position="165"/>
        <end position="188"/>
    </location>
</feature>
<evidence type="ECO:0000256" key="1">
    <source>
        <dbReference type="SAM" id="MobiDB-lite"/>
    </source>
</evidence>
<evidence type="ECO:0000305" key="2"/>
<sequence>MSQYQNQYGAQTGMTDEYGNPVNQVDQYGNPISGGGFTGEAGRQHFGTTGGATDHGHGHGQQHRGVDQTTGYGTHTGGVGGYGTNPEYGNTNTGSGYGTGTGYGGSGTNEYVREDHHGDKKGVMDKIKEKIPGTEQSRTNTDGAGYGSTGYGASGGGIGNTGQEYVREEHRVDHGEKKGIMDKIKEKLPGTGGCTGH</sequence>
<accession>P28639</accession>
<proteinExistence type="evidence at transcript level"/>
<comment type="tissue specificity">
    <text>Shoots, roots, and cotyledon from dehydrating seedlings.</text>
</comment>
<comment type="induction">
    <text>By abscisic acid (ABA) and water stress.</text>
</comment>
<comment type="similarity">
    <text evidence="2">Belongs to the plant dehydrin family.</text>
</comment>